<gene>
    <name evidence="1" type="primary">frr</name>
    <name type="ordered locus">Sez_1450</name>
</gene>
<feature type="chain" id="PRO_1000090788" description="Ribosome-recycling factor">
    <location>
        <begin position="1"/>
        <end position="185"/>
    </location>
</feature>
<protein>
    <recommendedName>
        <fullName evidence="1">Ribosome-recycling factor</fullName>
        <shortName evidence="1">RRF</shortName>
    </recommendedName>
    <alternativeName>
        <fullName evidence="1">Ribosome-releasing factor</fullName>
    </alternativeName>
</protein>
<keyword id="KW-0963">Cytoplasm</keyword>
<keyword id="KW-0648">Protein biosynthesis</keyword>
<comment type="function">
    <text evidence="1">Responsible for the release of ribosomes from messenger RNA at the termination of protein biosynthesis. May increase the efficiency of translation by recycling ribosomes from one round of translation to another.</text>
</comment>
<comment type="subcellular location">
    <subcellularLocation>
        <location evidence="1">Cytoplasm</location>
    </subcellularLocation>
</comment>
<comment type="similarity">
    <text evidence="1">Belongs to the RRF family.</text>
</comment>
<reference key="1">
    <citation type="journal article" date="2008" name="PLoS ONE">
        <title>Genome sequence of a lancefield group C Streptococcus zooepidemicus strain causing epidemic nephritis: new information about an old disease.</title>
        <authorList>
            <person name="Beres S.B."/>
            <person name="Sesso R."/>
            <person name="Pinto S.W.L."/>
            <person name="Hoe N.P."/>
            <person name="Porcella S.F."/>
            <person name="Deleo F.R."/>
            <person name="Musser J.M."/>
        </authorList>
    </citation>
    <scope>NUCLEOTIDE SEQUENCE [LARGE SCALE GENOMIC DNA]</scope>
    <source>
        <strain>MGCS10565</strain>
    </source>
</reference>
<evidence type="ECO:0000255" key="1">
    <source>
        <dbReference type="HAMAP-Rule" id="MF_00040"/>
    </source>
</evidence>
<proteinExistence type="inferred from homology"/>
<organism>
    <name type="scientific">Streptococcus equi subsp. zooepidemicus (strain MGCS10565)</name>
    <dbReference type="NCBI Taxonomy" id="552526"/>
    <lineage>
        <taxon>Bacteria</taxon>
        <taxon>Bacillati</taxon>
        <taxon>Bacillota</taxon>
        <taxon>Bacilli</taxon>
        <taxon>Lactobacillales</taxon>
        <taxon>Streptococcaceae</taxon>
        <taxon>Streptococcus</taxon>
    </lineage>
</organism>
<sequence length="185" mass="20554">MANAIIETAKERFTQSHHSLAREYASIRAGRANASLLDRIQVDYYGAPTPLNQLASITVPEARVLLISPFDKSSIKDIERALNASDLGITPANDGSVIRLVIPALTEETRKELAKEVKKVGETAKVSIRNIRRDAMDEAKKQEKAKEITEDELKALEKDIQKATDEAVKEIDRMTADKEKELLSV</sequence>
<dbReference type="EMBL" id="CP001129">
    <property type="protein sequence ID" value="ACG62784.1"/>
    <property type="molecule type" value="Genomic_DNA"/>
</dbReference>
<dbReference type="RefSeq" id="WP_012516046.1">
    <property type="nucleotide sequence ID" value="NC_011134.1"/>
</dbReference>
<dbReference type="SMR" id="B4U467"/>
<dbReference type="KEGG" id="sez:Sez_1450"/>
<dbReference type="HOGENOM" id="CLU_073981_2_0_9"/>
<dbReference type="Proteomes" id="UP000001873">
    <property type="component" value="Chromosome"/>
</dbReference>
<dbReference type="GO" id="GO:0005737">
    <property type="term" value="C:cytoplasm"/>
    <property type="evidence" value="ECO:0007669"/>
    <property type="project" value="UniProtKB-SubCell"/>
</dbReference>
<dbReference type="GO" id="GO:0043023">
    <property type="term" value="F:ribosomal large subunit binding"/>
    <property type="evidence" value="ECO:0007669"/>
    <property type="project" value="TreeGrafter"/>
</dbReference>
<dbReference type="GO" id="GO:0006415">
    <property type="term" value="P:translational termination"/>
    <property type="evidence" value="ECO:0007669"/>
    <property type="project" value="UniProtKB-UniRule"/>
</dbReference>
<dbReference type="CDD" id="cd00520">
    <property type="entry name" value="RRF"/>
    <property type="match status" value="1"/>
</dbReference>
<dbReference type="FunFam" id="1.10.132.20:FF:000001">
    <property type="entry name" value="Ribosome-recycling factor"/>
    <property type="match status" value="1"/>
</dbReference>
<dbReference type="FunFam" id="3.30.1360.40:FF:000001">
    <property type="entry name" value="Ribosome-recycling factor"/>
    <property type="match status" value="1"/>
</dbReference>
<dbReference type="Gene3D" id="3.30.1360.40">
    <property type="match status" value="1"/>
</dbReference>
<dbReference type="Gene3D" id="1.10.132.20">
    <property type="entry name" value="Ribosome-recycling factor"/>
    <property type="match status" value="1"/>
</dbReference>
<dbReference type="HAMAP" id="MF_00040">
    <property type="entry name" value="RRF"/>
    <property type="match status" value="1"/>
</dbReference>
<dbReference type="InterPro" id="IPR002661">
    <property type="entry name" value="Ribosome_recyc_fac"/>
</dbReference>
<dbReference type="InterPro" id="IPR023584">
    <property type="entry name" value="Ribosome_recyc_fac_dom"/>
</dbReference>
<dbReference type="InterPro" id="IPR036191">
    <property type="entry name" value="RRF_sf"/>
</dbReference>
<dbReference type="NCBIfam" id="TIGR00496">
    <property type="entry name" value="frr"/>
    <property type="match status" value="1"/>
</dbReference>
<dbReference type="PANTHER" id="PTHR20982:SF3">
    <property type="entry name" value="MITOCHONDRIAL RIBOSOME RECYCLING FACTOR PSEUDO 1"/>
    <property type="match status" value="1"/>
</dbReference>
<dbReference type="PANTHER" id="PTHR20982">
    <property type="entry name" value="RIBOSOME RECYCLING FACTOR"/>
    <property type="match status" value="1"/>
</dbReference>
<dbReference type="Pfam" id="PF01765">
    <property type="entry name" value="RRF"/>
    <property type="match status" value="1"/>
</dbReference>
<dbReference type="SUPFAM" id="SSF55194">
    <property type="entry name" value="Ribosome recycling factor, RRF"/>
    <property type="match status" value="1"/>
</dbReference>
<name>RRF_STREM</name>
<accession>B4U467</accession>